<comment type="function">
    <text evidence="1">Prenyltransferase that catalyzes the transfer of the geranylgeranyl moiety of geranylgeranyl diphosphate (GGPP) to the C2 hydroxyl of (S)-3-O-geranylgeranylglyceryl phosphate (GGGP). This reaction is the second ether-bond-formation step in the biosynthesis of archaeal membrane lipids.</text>
</comment>
<comment type="catalytic activity">
    <reaction evidence="1">
        <text>sn-3-O-(geranylgeranyl)glycerol 1-phosphate + (2E,6E,10E)-geranylgeranyl diphosphate = 2,3-bis-O-(geranylgeranyl)-sn-glycerol 1-phosphate + diphosphate</text>
        <dbReference type="Rhea" id="RHEA:18109"/>
        <dbReference type="ChEBI" id="CHEBI:33019"/>
        <dbReference type="ChEBI" id="CHEBI:57677"/>
        <dbReference type="ChEBI" id="CHEBI:58756"/>
        <dbReference type="ChEBI" id="CHEBI:58837"/>
        <dbReference type="EC" id="2.5.1.42"/>
    </reaction>
</comment>
<comment type="cofactor">
    <cofactor evidence="1">
        <name>Mg(2+)</name>
        <dbReference type="ChEBI" id="CHEBI:18420"/>
    </cofactor>
</comment>
<comment type="pathway">
    <text evidence="1">Membrane lipid metabolism; glycerophospholipid metabolism.</text>
</comment>
<comment type="subcellular location">
    <subcellularLocation>
        <location evidence="1">Cell membrane</location>
        <topology evidence="1">Multi-pass membrane protein</topology>
    </subcellularLocation>
</comment>
<comment type="similarity">
    <text evidence="1">Belongs to the UbiA prenyltransferase family. DGGGP synthase subfamily.</text>
</comment>
<evidence type="ECO:0000255" key="1">
    <source>
        <dbReference type="HAMAP-Rule" id="MF_01286"/>
    </source>
</evidence>
<gene>
    <name type="ordered locus">Saci_1565</name>
</gene>
<organism>
    <name type="scientific">Sulfolobus acidocaldarius (strain ATCC 33909 / DSM 639 / JCM 8929 / NBRC 15157 / NCIMB 11770)</name>
    <dbReference type="NCBI Taxonomy" id="330779"/>
    <lineage>
        <taxon>Archaea</taxon>
        <taxon>Thermoproteota</taxon>
        <taxon>Thermoprotei</taxon>
        <taxon>Sulfolobales</taxon>
        <taxon>Sulfolobaceae</taxon>
        <taxon>Sulfolobus</taxon>
    </lineage>
</organism>
<proteinExistence type="inferred from homology"/>
<reference key="1">
    <citation type="journal article" date="2005" name="J. Bacteriol.">
        <title>The genome of Sulfolobus acidocaldarius, a model organism of the Crenarchaeota.</title>
        <authorList>
            <person name="Chen L."/>
            <person name="Bruegger K."/>
            <person name="Skovgaard M."/>
            <person name="Redder P."/>
            <person name="She Q."/>
            <person name="Torarinsson E."/>
            <person name="Greve B."/>
            <person name="Awayez M."/>
            <person name="Zibat A."/>
            <person name="Klenk H.-P."/>
            <person name="Garrett R.A."/>
        </authorList>
    </citation>
    <scope>NUCLEOTIDE SEQUENCE [LARGE SCALE GENOMIC DNA]</scope>
    <source>
        <strain>ATCC 33909 / DSM 639 / JCM 8929 / NBRC 15157 / NCIMB 11770</strain>
    </source>
</reference>
<name>DGGGP_SULAC</name>
<accession>Q4J8K2</accession>
<feature type="chain" id="PRO_0000350719" description="Digeranylgeranylglyceryl phosphate synthase">
    <location>
        <begin position="1"/>
        <end position="275"/>
    </location>
</feature>
<feature type="transmembrane region" description="Helical" evidence="1">
    <location>
        <begin position="12"/>
        <end position="32"/>
    </location>
</feature>
<feature type="transmembrane region" description="Helical" evidence="1">
    <location>
        <begin position="35"/>
        <end position="55"/>
    </location>
</feature>
<feature type="transmembrane region" description="Helical" evidence="1">
    <location>
        <begin position="88"/>
        <end position="108"/>
    </location>
</feature>
<feature type="transmembrane region" description="Helical" evidence="1">
    <location>
        <begin position="125"/>
        <end position="145"/>
    </location>
</feature>
<feature type="transmembrane region" description="Helical" evidence="1">
    <location>
        <begin position="146"/>
        <end position="166"/>
    </location>
</feature>
<feature type="transmembrane region" description="Helical" evidence="1">
    <location>
        <begin position="200"/>
        <end position="220"/>
    </location>
</feature>
<feature type="transmembrane region" description="Helical" evidence="1">
    <location>
        <begin position="224"/>
        <end position="244"/>
    </location>
</feature>
<feature type="transmembrane region" description="Helical" evidence="1">
    <location>
        <begin position="255"/>
        <end position="275"/>
    </location>
</feature>
<keyword id="KW-1003">Cell membrane</keyword>
<keyword id="KW-0444">Lipid biosynthesis</keyword>
<keyword id="KW-0443">Lipid metabolism</keyword>
<keyword id="KW-0460">Magnesium</keyword>
<keyword id="KW-0472">Membrane</keyword>
<keyword id="KW-0594">Phospholipid biosynthesis</keyword>
<keyword id="KW-1208">Phospholipid metabolism</keyword>
<keyword id="KW-1185">Reference proteome</keyword>
<keyword id="KW-0808">Transferase</keyword>
<keyword id="KW-0812">Transmembrane</keyword>
<keyword id="KW-1133">Transmembrane helix</keyword>
<dbReference type="EC" id="2.5.1.42" evidence="1"/>
<dbReference type="EMBL" id="CP000077">
    <property type="protein sequence ID" value="AAY80878.1"/>
    <property type="molecule type" value="Genomic_DNA"/>
</dbReference>
<dbReference type="RefSeq" id="WP_011278380.1">
    <property type="nucleotide sequence ID" value="NC_007181.1"/>
</dbReference>
<dbReference type="SMR" id="Q4J8K2"/>
<dbReference type="STRING" id="330779.Saci_1565"/>
<dbReference type="GeneID" id="14552058"/>
<dbReference type="KEGG" id="sai:Saci_1565"/>
<dbReference type="PATRIC" id="fig|330779.12.peg.1505"/>
<dbReference type="eggNOG" id="arCOG00476">
    <property type="taxonomic scope" value="Archaea"/>
</dbReference>
<dbReference type="HOGENOM" id="CLU_073311_1_1_2"/>
<dbReference type="UniPathway" id="UPA00940"/>
<dbReference type="Proteomes" id="UP000001018">
    <property type="component" value="Chromosome"/>
</dbReference>
<dbReference type="GO" id="GO:0005886">
    <property type="term" value="C:plasma membrane"/>
    <property type="evidence" value="ECO:0007669"/>
    <property type="project" value="UniProtKB-SubCell"/>
</dbReference>
<dbReference type="GO" id="GO:0047295">
    <property type="term" value="F:geranylgeranylglycerol-phosphate geranylgeranyltransferase activity"/>
    <property type="evidence" value="ECO:0007669"/>
    <property type="project" value="UniProtKB-UniRule"/>
</dbReference>
<dbReference type="GO" id="GO:0000287">
    <property type="term" value="F:magnesium ion binding"/>
    <property type="evidence" value="ECO:0007669"/>
    <property type="project" value="UniProtKB-UniRule"/>
</dbReference>
<dbReference type="GO" id="GO:0046474">
    <property type="term" value="P:glycerophospholipid biosynthetic process"/>
    <property type="evidence" value="ECO:0007669"/>
    <property type="project" value="UniProtKB-UniRule"/>
</dbReference>
<dbReference type="CDD" id="cd13961">
    <property type="entry name" value="PT_UbiA_DGGGPS"/>
    <property type="match status" value="1"/>
</dbReference>
<dbReference type="Gene3D" id="1.10.357.140">
    <property type="entry name" value="UbiA prenyltransferase"/>
    <property type="match status" value="1"/>
</dbReference>
<dbReference type="Gene3D" id="1.20.120.1780">
    <property type="entry name" value="UbiA prenyltransferase"/>
    <property type="match status" value="1"/>
</dbReference>
<dbReference type="HAMAP" id="MF_01286">
    <property type="entry name" value="DGGGP_synth"/>
    <property type="match status" value="1"/>
</dbReference>
<dbReference type="InterPro" id="IPR023547">
    <property type="entry name" value="DGGGP_synth"/>
</dbReference>
<dbReference type="InterPro" id="IPR050475">
    <property type="entry name" value="Prenyltransferase_related"/>
</dbReference>
<dbReference type="InterPro" id="IPR000537">
    <property type="entry name" value="UbiA_prenyltransferase"/>
</dbReference>
<dbReference type="InterPro" id="IPR044878">
    <property type="entry name" value="UbiA_sf"/>
</dbReference>
<dbReference type="PANTHER" id="PTHR42723">
    <property type="entry name" value="CHLOROPHYLL SYNTHASE"/>
    <property type="match status" value="1"/>
</dbReference>
<dbReference type="PANTHER" id="PTHR42723:SF1">
    <property type="entry name" value="CHLOROPHYLL SYNTHASE, CHLOROPLASTIC"/>
    <property type="match status" value="1"/>
</dbReference>
<dbReference type="Pfam" id="PF01040">
    <property type="entry name" value="UbiA"/>
    <property type="match status" value="1"/>
</dbReference>
<sequence length="275" mass="30128">MSVKAYLELIRVHNVVGSAVSAFMGYVIATTWKFTPLFFLPLLVVSLIAAGGYVINDVYDIEVDKINKPERPLPSGRIAVNIARRFSIVLFAVGLIISIPLGLIPFGFALITIVLLYEYARSLKKLGLVGNFIVALTSALSAYYGGLASGSLLGNFIIPTIYIFFFTLSREFVKGIEDIEGDKRNGVNTLAVKLGEKSTWIIAKIILGILIFTSPLPYFLGFNVIYLIGILALDVLLVYILILHNTIESATKARSLMKIYAIGTLIVFTLGSLRI</sequence>
<protein>
    <recommendedName>
        <fullName evidence="1">Digeranylgeranylglyceryl phosphate synthase</fullName>
        <shortName evidence="1">DGGGP synthase</shortName>
        <shortName evidence="1">DGGGPS</shortName>
        <ecNumber evidence="1">2.5.1.42</ecNumber>
    </recommendedName>
    <alternativeName>
        <fullName evidence="1">(S)-2,3-di-O-geranylgeranylglyceryl phosphate synthase</fullName>
    </alternativeName>
    <alternativeName>
        <fullName evidence="1">Geranylgeranylglycerol-phosphate geranylgeranyltransferase</fullName>
    </alternativeName>
</protein>